<reference key="1">
    <citation type="journal article" date="2003" name="Proc. Natl. Acad. Sci. U.S.A.">
        <title>The complete genome sequence of Mycobacterium bovis.</title>
        <authorList>
            <person name="Garnier T."/>
            <person name="Eiglmeier K."/>
            <person name="Camus J.-C."/>
            <person name="Medina N."/>
            <person name="Mansoor H."/>
            <person name="Pryor M."/>
            <person name="Duthoy S."/>
            <person name="Grondin S."/>
            <person name="Lacroix C."/>
            <person name="Monsempe C."/>
            <person name="Simon S."/>
            <person name="Harris B."/>
            <person name="Atkin R."/>
            <person name="Doggett J."/>
            <person name="Mayes R."/>
            <person name="Keating L."/>
            <person name="Wheeler P.R."/>
            <person name="Parkhill J."/>
            <person name="Barrell B.G."/>
            <person name="Cole S.T."/>
            <person name="Gordon S.V."/>
            <person name="Hewinson R.G."/>
        </authorList>
    </citation>
    <scope>NUCLEOTIDE SEQUENCE [LARGE SCALE GENOMIC DNA]</scope>
    <source>
        <strain>ATCC BAA-935 / AF2122/97</strain>
    </source>
</reference>
<reference key="2">
    <citation type="journal article" date="2017" name="Genome Announc.">
        <title>Updated reference genome sequence and annotation of Mycobacterium bovis AF2122/97.</title>
        <authorList>
            <person name="Malone K.M."/>
            <person name="Farrell D."/>
            <person name="Stuber T.P."/>
            <person name="Schubert O.T."/>
            <person name="Aebersold R."/>
            <person name="Robbe-Austerman S."/>
            <person name="Gordon S.V."/>
        </authorList>
    </citation>
    <scope>NUCLEOTIDE SEQUENCE [LARGE SCALE GENOMIC DNA]</scope>
    <scope>GENOME REANNOTATION</scope>
    <source>
        <strain>ATCC BAA-935 / AF2122/97</strain>
    </source>
</reference>
<organism>
    <name type="scientific">Mycobacterium bovis (strain ATCC BAA-935 / AF2122/97)</name>
    <dbReference type="NCBI Taxonomy" id="233413"/>
    <lineage>
        <taxon>Bacteria</taxon>
        <taxon>Bacillati</taxon>
        <taxon>Actinomycetota</taxon>
        <taxon>Actinomycetes</taxon>
        <taxon>Mycobacteriales</taxon>
        <taxon>Mycobacteriaceae</taxon>
        <taxon>Mycobacterium</taxon>
        <taxon>Mycobacterium tuberculosis complex</taxon>
    </lineage>
</organism>
<keyword id="KW-0472">Membrane</keyword>
<keyword id="KW-1185">Reference proteome</keyword>
<keyword id="KW-0732">Signal</keyword>
<keyword id="KW-0812">Transmembrane</keyword>
<keyword id="KW-1133">Transmembrane helix</keyword>
<comment type="subcellular location">
    <subcellularLocation>
        <location evidence="2">Membrane</location>
        <topology evidence="2">Single-pass membrane protein</topology>
    </subcellularLocation>
</comment>
<comment type="similarity">
    <text evidence="2">To M.leprae ML2453.</text>
</comment>
<feature type="signal peptide" evidence="1">
    <location>
        <begin position="1"/>
        <end position="19"/>
    </location>
</feature>
<feature type="chain" id="PRO_0000014072" description="Uncharacterized protein Mb0486">
    <location>
        <begin position="20"/>
        <end position="87"/>
    </location>
</feature>
<feature type="transmembrane region" description="Helical" evidence="1">
    <location>
        <begin position="39"/>
        <end position="59"/>
    </location>
</feature>
<accession>P64696</accession>
<accession>A0A1R3XVG6</accession>
<accession>Q11143</accession>
<accession>X2BF48</accession>
<dbReference type="EMBL" id="LT708304">
    <property type="protein sequence ID" value="SIT99081.1"/>
    <property type="molecule type" value="Genomic_DNA"/>
</dbReference>
<dbReference type="RefSeq" id="NP_854149.1">
    <property type="nucleotide sequence ID" value="NC_002945.3"/>
</dbReference>
<dbReference type="PATRIC" id="fig|233413.5.peg.528"/>
<dbReference type="Proteomes" id="UP000001419">
    <property type="component" value="Chromosome"/>
</dbReference>
<dbReference type="GO" id="GO:0016020">
    <property type="term" value="C:membrane"/>
    <property type="evidence" value="ECO:0007669"/>
    <property type="project" value="UniProtKB-SubCell"/>
</dbReference>
<dbReference type="InterPro" id="IPR019662">
    <property type="entry name" value="DUF2516"/>
</dbReference>
<dbReference type="Pfam" id="PF10724">
    <property type="entry name" value="DUF2516"/>
    <property type="match status" value="1"/>
</dbReference>
<protein>
    <recommendedName>
        <fullName>Uncharacterized protein Mb0486</fullName>
    </recommendedName>
</protein>
<proteinExistence type="inferred from homology"/>
<sequence>MLVLLVAVLVTAVYAFVHAALQRPDAYTAADKLTKPVWLVILGAAVALASILYPVLGVLGMAMSACASGVYLVDVRPKLLEIQGKSR</sequence>
<gene>
    <name type="ordered locus">BQ2027_MB0486</name>
</gene>
<evidence type="ECO:0000255" key="1"/>
<evidence type="ECO:0000305" key="2"/>
<name>Y486_MYCBO</name>